<dbReference type="EC" id="7.1.1.-" evidence="1"/>
<dbReference type="EMBL" id="J04954">
    <property type="protein sequence ID" value="AAA84731.1"/>
    <property type="status" value="ALT_INIT"/>
    <property type="molecule type" value="Genomic_DNA"/>
</dbReference>
<dbReference type="EMBL" id="AB042240">
    <property type="protein sequence ID" value="BAB47038.1"/>
    <property type="status" value="ALT_INIT"/>
    <property type="molecule type" value="Genomic_DNA"/>
</dbReference>
<dbReference type="PIR" id="S09666">
    <property type="entry name" value="S09666"/>
</dbReference>
<dbReference type="RefSeq" id="NP_114263.1">
    <property type="nucleotide sequence ID" value="NC_002762.1"/>
</dbReference>
<dbReference type="SMR" id="P26304"/>
<dbReference type="STRING" id="4565.P26304"/>
<dbReference type="PaxDb" id="4565-EPlTAEP00000010008"/>
<dbReference type="EnsemblPlants" id="TraesJUL1A03G00160340.1">
    <property type="protein sequence ID" value="TraesJUL1A03G00160340.1.CDS1"/>
    <property type="gene ID" value="TraesJUL1A03G00160340"/>
</dbReference>
<dbReference type="EnsemblPlants" id="TraesKAR1A01G0358790.1">
    <property type="protein sequence ID" value="cds.TraesKAR1A01G0358790.1"/>
    <property type="gene ID" value="TraesKAR1A01G0358790"/>
</dbReference>
<dbReference type="EnsemblPlants" id="TraesKAR2D01G0029870.1">
    <property type="protein sequence ID" value="cds.TraesKAR2D01G0029870.1"/>
    <property type="gene ID" value="TraesKAR2D01G0029870"/>
</dbReference>
<dbReference type="EnsemblPlants" id="TraesKAR2D01G0458540.1">
    <property type="protein sequence ID" value="cds.TraesKAR2D01G0458540.1"/>
    <property type="gene ID" value="TraesKAR2D01G0458540"/>
</dbReference>
<dbReference type="EnsemblPlants" id="TraesKAR6B01G0220270.1">
    <property type="protein sequence ID" value="cds.TraesKAR6B01G0220270.1"/>
    <property type="gene ID" value="TraesKAR6B01G0220270"/>
</dbReference>
<dbReference type="EnsemblPlants" id="TraesKAR7A01G0472640.1">
    <property type="protein sequence ID" value="cds.TraesKAR7A01G0472640.1"/>
    <property type="gene ID" value="TraesKAR7A01G0472640"/>
</dbReference>
<dbReference type="EnsemblPlants" id="TraesKARUn01G0034710.1">
    <property type="protein sequence ID" value="cds.TraesKARUn01G0034710.1"/>
    <property type="gene ID" value="TraesKARUn01G0034710"/>
</dbReference>
<dbReference type="EnsemblPlants" id="TraesKARUn01G0034880.1">
    <property type="protein sequence ID" value="cds.TraesKARUn01G0034880.1"/>
    <property type="gene ID" value="TraesKARUn01G0034880"/>
</dbReference>
<dbReference type="EnsemblPlants" id="TraesKARUn01G0035020.1">
    <property type="protein sequence ID" value="cds.TraesKARUn01G0035020.1"/>
    <property type="gene ID" value="TraesKARUn01G0035020"/>
</dbReference>
<dbReference type="EnsemblPlants" id="TraesKARUn01G0035190.1">
    <property type="protein sequence ID" value="cds.TraesKARUn01G0035190.1"/>
    <property type="gene ID" value="TraesKARUn01G0035190"/>
</dbReference>
<dbReference type="EnsemblPlants" id="TraesKARUn01G0072110.1">
    <property type="protein sequence ID" value="cds.TraesKARUn01G0072110.1"/>
    <property type="gene ID" value="TraesKARUn01G0072110"/>
</dbReference>
<dbReference type="EnsemblPlants" id="TraesKARUn01G0075240.1">
    <property type="protein sequence ID" value="cds.TraesKARUn01G0075240.1"/>
    <property type="gene ID" value="TraesKARUn01G0075240"/>
</dbReference>
<dbReference type="EnsemblPlants" id="TraesKARUn01G0089820.1">
    <property type="protein sequence ID" value="cds.TraesKARUn01G0089820.1"/>
    <property type="gene ID" value="TraesKARUn01G0089820"/>
</dbReference>
<dbReference type="EnsemblPlants" id="TraesKARUn01G0089890.1">
    <property type="protein sequence ID" value="cds.TraesKARUn01G0089890.1"/>
    <property type="gene ID" value="TraesKARUn01G0089890"/>
</dbReference>
<dbReference type="EnsemblPlants" id="TraesKARUn01G0090070.1">
    <property type="protein sequence ID" value="cds.TraesKARUn01G0090070.1"/>
    <property type="gene ID" value="TraesKARUn01G0090070"/>
</dbReference>
<dbReference type="EnsemblPlants" id="TraesKARUn01G0090290.1">
    <property type="protein sequence ID" value="cds.TraesKARUn01G0090290.1"/>
    <property type="gene ID" value="TraesKARUn01G0090290"/>
</dbReference>
<dbReference type="EnsemblPlants" id="TraesKARUn01G0090660.1">
    <property type="protein sequence ID" value="cds.TraesKARUn01G0090660.1"/>
    <property type="gene ID" value="TraesKARUn01G0090660"/>
</dbReference>
<dbReference type="EnsemblPlants" id="TraesKARUn01G0091140.1">
    <property type="protein sequence ID" value="cds.TraesKARUn01G0091140.1"/>
    <property type="gene ID" value="TraesKARUn01G0091140"/>
</dbReference>
<dbReference type="EnsemblPlants" id="TraesKARUn01G0091590.1">
    <property type="protein sequence ID" value="cds.TraesKARUn01G0091590.1"/>
    <property type="gene ID" value="TraesKARUn01G0091590"/>
</dbReference>
<dbReference type="EnsemblPlants" id="TraesKARUn01G0091720.1">
    <property type="protein sequence ID" value="cds.TraesKARUn01G0091720.1"/>
    <property type="gene ID" value="TraesKARUn01G0091720"/>
</dbReference>
<dbReference type="EnsemblPlants" id="TraesKARUn01G0097730.1">
    <property type="protein sequence ID" value="cds.TraesKARUn01G0097730.1"/>
    <property type="gene ID" value="TraesKARUn01G0097730"/>
</dbReference>
<dbReference type="EnsemblPlants" id="TraesKARUn01G0137840.1">
    <property type="protein sequence ID" value="cds.TraesKARUn01G0137840.1"/>
    <property type="gene ID" value="TraesKARUn01G0137840"/>
</dbReference>
<dbReference type="EnsemblPlants" id="TraesKARUn01G0137900.1">
    <property type="protein sequence ID" value="cds.TraesKARUn01G0137900.1"/>
    <property type="gene ID" value="TraesKARUn01G0137900"/>
</dbReference>
<dbReference type="EnsemblPlants" id="TraesKARUn01G0138170.1">
    <property type="protein sequence ID" value="cds.TraesKARUn01G0138170.1"/>
    <property type="gene ID" value="TraesKARUn01G0138170"/>
</dbReference>
<dbReference type="EnsemblPlants" id="TraesKARUn01G0138780.1">
    <property type="protein sequence ID" value="cds.TraesKARUn01G0138780.1"/>
    <property type="gene ID" value="TraesKARUn01G0138780"/>
</dbReference>
<dbReference type="EnsemblPlants" id="TraesKARUn01G0139050.1">
    <property type="protein sequence ID" value="cds.TraesKARUn01G0139050.1"/>
    <property type="gene ID" value="TraesKARUn01G0139050"/>
</dbReference>
<dbReference type="EnsemblPlants" id="TraesKARUn01G0139110.1">
    <property type="protein sequence ID" value="cds.TraesKARUn01G0139110.1"/>
    <property type="gene ID" value="TraesKARUn01G0139110"/>
</dbReference>
<dbReference type="EnsemblPlants" id="TraesKARUn01G0139140.1">
    <property type="protein sequence ID" value="cds.TraesKARUn01G0139140.1"/>
    <property type="gene ID" value="TraesKARUn01G0139140"/>
</dbReference>
<dbReference type="EnsemblPlants" id="TraesKARUn01G0152720.1">
    <property type="protein sequence ID" value="cds.TraesKARUn01G0152720.1"/>
    <property type="gene ID" value="TraesKARUn01G0152720"/>
</dbReference>
<dbReference type="EnsemblPlants" id="TraesKARUn01G0163220.1">
    <property type="protein sequence ID" value="cds.TraesKARUn01G0163220.1"/>
    <property type="gene ID" value="TraesKARUn01G0163220"/>
</dbReference>
<dbReference type="EnsemblPlants" id="TraesKARUn01G0164140.1">
    <property type="protein sequence ID" value="cds.TraesKARUn01G0164140.1"/>
    <property type="gene ID" value="TraesKARUn01G0164140"/>
</dbReference>
<dbReference type="EnsemblPlants" id="TraesKARUn01G0164270.1">
    <property type="protein sequence ID" value="cds.TraesKARUn01G0164270.1"/>
    <property type="gene ID" value="TraesKARUn01G0164270"/>
</dbReference>
<dbReference type="EnsemblPlants" id="TraesKARUn01G0164360.1">
    <property type="protein sequence ID" value="cds.TraesKARUn01G0164360.1"/>
    <property type="gene ID" value="TraesKARUn01G0164360"/>
</dbReference>
<dbReference type="EnsemblPlants" id="TraesKARUn01G0164660.1">
    <property type="protein sequence ID" value="cds.TraesKARUn01G0164660.1"/>
    <property type="gene ID" value="TraesKARUn01G0164660"/>
</dbReference>
<dbReference type="EnsemblPlants" id="TraesPARA_EIv1.0_2673740.1">
    <property type="protein sequence ID" value="TraesPARA_EIv1.0_2673740.1.CDS1"/>
    <property type="gene ID" value="TraesPARA_EIv1.0_2673740"/>
</dbReference>
<dbReference type="EnsemblPlants" id="TraesPARA_EIv1.0_2677470.1">
    <property type="protein sequence ID" value="TraesPARA_EIv1.0_2677470.1.CDS1"/>
    <property type="gene ID" value="TraesPARA_EIv1.0_2677470"/>
</dbReference>
<dbReference type="EnsemblPlants" id="TraesPARA_EIv1.0_2681460.1">
    <property type="protein sequence ID" value="TraesPARA_EIv1.0_2681460.1.CDS1"/>
    <property type="gene ID" value="TraesPARA_EIv1.0_2681460"/>
</dbReference>
<dbReference type="EnsemblPlants" id="TraesRN1A0100986900.1">
    <property type="protein sequence ID" value="TraesRN1A0100986900.1"/>
    <property type="gene ID" value="TraesRN1A0100986900"/>
</dbReference>
<dbReference type="EnsemblPlants" id="TraesRN1D0100500400.1">
    <property type="protein sequence ID" value="TraesRN1D0100500400.1"/>
    <property type="gene ID" value="TraesRN1D0100500400"/>
</dbReference>
<dbReference type="GeneID" id="803151"/>
<dbReference type="Gramene" id="TraesJUL1A03G00160340.1">
    <property type="protein sequence ID" value="TraesJUL1A03G00160340.1.CDS1"/>
    <property type="gene ID" value="TraesJUL1A03G00160340"/>
</dbReference>
<dbReference type="Gramene" id="TraesKAR1A01G0358790.1">
    <property type="protein sequence ID" value="cds.TraesKAR1A01G0358790.1"/>
    <property type="gene ID" value="TraesKAR1A01G0358790"/>
</dbReference>
<dbReference type="Gramene" id="TraesKAR2D01G0029870.1">
    <property type="protein sequence ID" value="cds.TraesKAR2D01G0029870.1"/>
    <property type="gene ID" value="TraesKAR2D01G0029870"/>
</dbReference>
<dbReference type="Gramene" id="TraesKAR2D01G0458540.1">
    <property type="protein sequence ID" value="cds.TraesKAR2D01G0458540.1"/>
    <property type="gene ID" value="TraesKAR2D01G0458540"/>
</dbReference>
<dbReference type="Gramene" id="TraesKAR6B01G0220270.1">
    <property type="protein sequence ID" value="cds.TraesKAR6B01G0220270.1"/>
    <property type="gene ID" value="TraesKAR6B01G0220270"/>
</dbReference>
<dbReference type="Gramene" id="TraesKAR7A01G0472640.1">
    <property type="protein sequence ID" value="cds.TraesKAR7A01G0472640.1"/>
    <property type="gene ID" value="TraesKAR7A01G0472640"/>
</dbReference>
<dbReference type="Gramene" id="TraesKARUn01G0034710.1">
    <property type="protein sequence ID" value="cds.TraesKARUn01G0034710.1"/>
    <property type="gene ID" value="TraesKARUn01G0034710"/>
</dbReference>
<dbReference type="Gramene" id="TraesKARUn01G0034880.1">
    <property type="protein sequence ID" value="cds.TraesKARUn01G0034880.1"/>
    <property type="gene ID" value="TraesKARUn01G0034880"/>
</dbReference>
<dbReference type="Gramene" id="TraesKARUn01G0035020.1">
    <property type="protein sequence ID" value="cds.TraesKARUn01G0035020.1"/>
    <property type="gene ID" value="TraesKARUn01G0035020"/>
</dbReference>
<dbReference type="Gramene" id="TraesKARUn01G0035190.1">
    <property type="protein sequence ID" value="cds.TraesKARUn01G0035190.1"/>
    <property type="gene ID" value="TraesKARUn01G0035190"/>
</dbReference>
<dbReference type="Gramene" id="TraesKARUn01G0072110.1">
    <property type="protein sequence ID" value="cds.TraesKARUn01G0072110.1"/>
    <property type="gene ID" value="TraesKARUn01G0072110"/>
</dbReference>
<dbReference type="Gramene" id="TraesKARUn01G0075240.1">
    <property type="protein sequence ID" value="cds.TraesKARUn01G0075240.1"/>
    <property type="gene ID" value="TraesKARUn01G0075240"/>
</dbReference>
<dbReference type="Gramene" id="TraesKARUn01G0089820.1">
    <property type="protein sequence ID" value="cds.TraesKARUn01G0089820.1"/>
    <property type="gene ID" value="TraesKARUn01G0089820"/>
</dbReference>
<dbReference type="Gramene" id="TraesKARUn01G0089890.1">
    <property type="protein sequence ID" value="cds.TraesKARUn01G0089890.1"/>
    <property type="gene ID" value="TraesKARUn01G0089890"/>
</dbReference>
<dbReference type="Gramene" id="TraesKARUn01G0090070.1">
    <property type="protein sequence ID" value="cds.TraesKARUn01G0090070.1"/>
    <property type="gene ID" value="TraesKARUn01G0090070"/>
</dbReference>
<dbReference type="Gramene" id="TraesKARUn01G0090290.1">
    <property type="protein sequence ID" value="cds.TraesKARUn01G0090290.1"/>
    <property type="gene ID" value="TraesKARUn01G0090290"/>
</dbReference>
<dbReference type="Gramene" id="TraesKARUn01G0090660.1">
    <property type="protein sequence ID" value="cds.TraesKARUn01G0090660.1"/>
    <property type="gene ID" value="TraesKARUn01G0090660"/>
</dbReference>
<dbReference type="Gramene" id="TraesKARUn01G0091140.1">
    <property type="protein sequence ID" value="cds.TraesKARUn01G0091140.1"/>
    <property type="gene ID" value="TraesKARUn01G0091140"/>
</dbReference>
<dbReference type="Gramene" id="TraesKARUn01G0091590.1">
    <property type="protein sequence ID" value="cds.TraesKARUn01G0091590.1"/>
    <property type="gene ID" value="TraesKARUn01G0091590"/>
</dbReference>
<dbReference type="Gramene" id="TraesKARUn01G0091720.1">
    <property type="protein sequence ID" value="cds.TraesKARUn01G0091720.1"/>
    <property type="gene ID" value="TraesKARUn01G0091720"/>
</dbReference>
<dbReference type="Gramene" id="TraesKARUn01G0097730.1">
    <property type="protein sequence ID" value="cds.TraesKARUn01G0097730.1"/>
    <property type="gene ID" value="TraesKARUn01G0097730"/>
</dbReference>
<dbReference type="Gramene" id="TraesKARUn01G0137840.1">
    <property type="protein sequence ID" value="cds.TraesKARUn01G0137840.1"/>
    <property type="gene ID" value="TraesKARUn01G0137840"/>
</dbReference>
<dbReference type="Gramene" id="TraesKARUn01G0137900.1">
    <property type="protein sequence ID" value="cds.TraesKARUn01G0137900.1"/>
    <property type="gene ID" value="TraesKARUn01G0137900"/>
</dbReference>
<dbReference type="Gramene" id="TraesKARUn01G0138170.1">
    <property type="protein sequence ID" value="cds.TraesKARUn01G0138170.1"/>
    <property type="gene ID" value="TraesKARUn01G0138170"/>
</dbReference>
<dbReference type="Gramene" id="TraesKARUn01G0138780.1">
    <property type="protein sequence ID" value="cds.TraesKARUn01G0138780.1"/>
    <property type="gene ID" value="TraesKARUn01G0138780"/>
</dbReference>
<dbReference type="Gramene" id="TraesKARUn01G0139050.1">
    <property type="protein sequence ID" value="cds.TraesKARUn01G0139050.1"/>
    <property type="gene ID" value="TraesKARUn01G0139050"/>
</dbReference>
<dbReference type="Gramene" id="TraesKARUn01G0139110.1">
    <property type="protein sequence ID" value="cds.TraesKARUn01G0139110.1"/>
    <property type="gene ID" value="TraesKARUn01G0139110"/>
</dbReference>
<dbReference type="Gramene" id="TraesKARUn01G0139140.1">
    <property type="protein sequence ID" value="cds.TraesKARUn01G0139140.1"/>
    <property type="gene ID" value="TraesKARUn01G0139140"/>
</dbReference>
<dbReference type="Gramene" id="TraesKARUn01G0152720.1">
    <property type="protein sequence ID" value="cds.TraesKARUn01G0152720.1"/>
    <property type="gene ID" value="TraesKARUn01G0152720"/>
</dbReference>
<dbReference type="Gramene" id="TraesKARUn01G0163220.1">
    <property type="protein sequence ID" value="cds.TraesKARUn01G0163220.1"/>
    <property type="gene ID" value="TraesKARUn01G0163220"/>
</dbReference>
<dbReference type="Gramene" id="TraesKARUn01G0164140.1">
    <property type="protein sequence ID" value="cds.TraesKARUn01G0164140.1"/>
    <property type="gene ID" value="TraesKARUn01G0164140"/>
</dbReference>
<dbReference type="Gramene" id="TraesKARUn01G0164270.1">
    <property type="protein sequence ID" value="cds.TraesKARUn01G0164270.1"/>
    <property type="gene ID" value="TraesKARUn01G0164270"/>
</dbReference>
<dbReference type="Gramene" id="TraesKARUn01G0164360.1">
    <property type="protein sequence ID" value="cds.TraesKARUn01G0164360.1"/>
    <property type="gene ID" value="TraesKARUn01G0164360"/>
</dbReference>
<dbReference type="Gramene" id="TraesKARUn01G0164660.1">
    <property type="protein sequence ID" value="cds.TraesKARUn01G0164660.1"/>
    <property type="gene ID" value="TraesKARUn01G0164660"/>
</dbReference>
<dbReference type="Gramene" id="TraesPARA_EIv1.0_2673740.1">
    <property type="protein sequence ID" value="TraesPARA_EIv1.0_2673740.1.CDS1"/>
    <property type="gene ID" value="TraesPARA_EIv1.0_2673740"/>
</dbReference>
<dbReference type="Gramene" id="TraesPARA_EIv1.0_2677470.1">
    <property type="protein sequence ID" value="TraesPARA_EIv1.0_2677470.1.CDS1"/>
    <property type="gene ID" value="TraesPARA_EIv1.0_2677470"/>
</dbReference>
<dbReference type="Gramene" id="TraesPARA_EIv1.0_2681460.1">
    <property type="protein sequence ID" value="TraesPARA_EIv1.0_2681460.1.CDS1"/>
    <property type="gene ID" value="TraesPARA_EIv1.0_2681460"/>
</dbReference>
<dbReference type="Gramene" id="TraesRN1A0100986900.1">
    <property type="protein sequence ID" value="TraesRN1A0100986900.1"/>
    <property type="gene ID" value="TraesRN1A0100986900"/>
</dbReference>
<dbReference type="Gramene" id="TraesRN1D0100500400.1">
    <property type="protein sequence ID" value="TraesRN1D0100500400.1"/>
    <property type="gene ID" value="TraesRN1D0100500400"/>
</dbReference>
<dbReference type="KEGG" id="taes:803151"/>
<dbReference type="eggNOG" id="KOG1687">
    <property type="taxonomic scope" value="Eukaryota"/>
</dbReference>
<dbReference type="HOGENOM" id="CLU_055737_2_1_1"/>
<dbReference type="Proteomes" id="UP000019116">
    <property type="component" value="Chloroplast"/>
</dbReference>
<dbReference type="GO" id="GO:0009535">
    <property type="term" value="C:chloroplast thylakoid membrane"/>
    <property type="evidence" value="ECO:0007669"/>
    <property type="project" value="UniProtKB-SubCell"/>
</dbReference>
<dbReference type="GO" id="GO:0045271">
    <property type="term" value="C:respiratory chain complex I"/>
    <property type="evidence" value="ECO:0000318"/>
    <property type="project" value="GO_Central"/>
</dbReference>
<dbReference type="GO" id="GO:0051539">
    <property type="term" value="F:4 iron, 4 sulfur cluster binding"/>
    <property type="evidence" value="ECO:0007669"/>
    <property type="project" value="UniProtKB-KW"/>
</dbReference>
<dbReference type="GO" id="GO:0005506">
    <property type="term" value="F:iron ion binding"/>
    <property type="evidence" value="ECO:0007669"/>
    <property type="project" value="UniProtKB-UniRule"/>
</dbReference>
<dbReference type="GO" id="GO:0008137">
    <property type="term" value="F:NADH dehydrogenase (ubiquinone) activity"/>
    <property type="evidence" value="ECO:0000318"/>
    <property type="project" value="GO_Central"/>
</dbReference>
<dbReference type="GO" id="GO:0048038">
    <property type="term" value="F:quinone binding"/>
    <property type="evidence" value="ECO:0007669"/>
    <property type="project" value="UniProtKB-KW"/>
</dbReference>
<dbReference type="GO" id="GO:0009060">
    <property type="term" value="P:aerobic respiration"/>
    <property type="evidence" value="ECO:0000318"/>
    <property type="project" value="GO_Central"/>
</dbReference>
<dbReference type="GO" id="GO:0015990">
    <property type="term" value="P:electron transport coupled proton transport"/>
    <property type="evidence" value="ECO:0000318"/>
    <property type="project" value="GO_Central"/>
</dbReference>
<dbReference type="GO" id="GO:0019684">
    <property type="term" value="P:photosynthesis, light reaction"/>
    <property type="evidence" value="ECO:0007669"/>
    <property type="project" value="UniProtKB-UniRule"/>
</dbReference>
<dbReference type="FunFam" id="3.40.50.12280:FF:000003">
    <property type="entry name" value="NAD(P)H-quinone oxidoreductase subunit K, chloroplastic"/>
    <property type="match status" value="1"/>
</dbReference>
<dbReference type="Gene3D" id="3.40.50.12280">
    <property type="match status" value="1"/>
</dbReference>
<dbReference type="HAMAP" id="MF_01356">
    <property type="entry name" value="NDH1_NuoB"/>
    <property type="match status" value="1"/>
</dbReference>
<dbReference type="InterPro" id="IPR006137">
    <property type="entry name" value="NADH_UbQ_OxRdtase-like_20kDa"/>
</dbReference>
<dbReference type="InterPro" id="IPR006138">
    <property type="entry name" value="NADH_UQ_OxRdtase_20Kd_su"/>
</dbReference>
<dbReference type="NCBIfam" id="TIGR01957">
    <property type="entry name" value="nuoB_fam"/>
    <property type="match status" value="1"/>
</dbReference>
<dbReference type="NCBIfam" id="NF005012">
    <property type="entry name" value="PRK06411.1"/>
    <property type="match status" value="1"/>
</dbReference>
<dbReference type="PANTHER" id="PTHR11995">
    <property type="entry name" value="NADH DEHYDROGENASE"/>
    <property type="match status" value="1"/>
</dbReference>
<dbReference type="PANTHER" id="PTHR11995:SF14">
    <property type="entry name" value="NADH DEHYDROGENASE [UBIQUINONE] IRON-SULFUR PROTEIN 7, MITOCHONDRIAL"/>
    <property type="match status" value="1"/>
</dbReference>
<dbReference type="Pfam" id="PF01058">
    <property type="entry name" value="Oxidored_q6"/>
    <property type="match status" value="1"/>
</dbReference>
<dbReference type="SUPFAM" id="SSF56770">
    <property type="entry name" value="HydA/Nqo6-like"/>
    <property type="match status" value="1"/>
</dbReference>
<dbReference type="PROSITE" id="PS01150">
    <property type="entry name" value="COMPLEX1_20K"/>
    <property type="match status" value="1"/>
</dbReference>
<keyword id="KW-0004">4Fe-4S</keyword>
<keyword id="KW-0150">Chloroplast</keyword>
<keyword id="KW-0408">Iron</keyword>
<keyword id="KW-0411">Iron-sulfur</keyword>
<keyword id="KW-0472">Membrane</keyword>
<keyword id="KW-0479">Metal-binding</keyword>
<keyword id="KW-0520">NAD</keyword>
<keyword id="KW-0521">NADP</keyword>
<keyword id="KW-0934">Plastid</keyword>
<keyword id="KW-0618">Plastoquinone</keyword>
<keyword id="KW-0874">Quinone</keyword>
<keyword id="KW-1185">Reference proteome</keyword>
<keyword id="KW-0793">Thylakoid</keyword>
<keyword id="KW-1278">Translocase</keyword>
<keyword id="KW-0813">Transport</keyword>
<organism>
    <name type="scientific">Triticum aestivum</name>
    <name type="common">Wheat</name>
    <dbReference type="NCBI Taxonomy" id="4565"/>
    <lineage>
        <taxon>Eukaryota</taxon>
        <taxon>Viridiplantae</taxon>
        <taxon>Streptophyta</taxon>
        <taxon>Embryophyta</taxon>
        <taxon>Tracheophyta</taxon>
        <taxon>Spermatophyta</taxon>
        <taxon>Magnoliopsida</taxon>
        <taxon>Liliopsida</taxon>
        <taxon>Poales</taxon>
        <taxon>Poaceae</taxon>
        <taxon>BOP clade</taxon>
        <taxon>Pooideae</taxon>
        <taxon>Triticodae</taxon>
        <taxon>Triticeae</taxon>
        <taxon>Triticinae</taxon>
        <taxon>Triticum</taxon>
    </lineage>
</organism>
<reference key="1">
    <citation type="journal article" date="1989" name="J. Biol. Chem.">
        <title>psbG is not a photosystem two gene but may be an ndh gene.</title>
        <authorList>
            <person name="Nixon P.J."/>
            <person name="Gounaris K."/>
            <person name="Coomber S.A."/>
            <person name="Hunter C.N."/>
            <person name="Dyer T.A."/>
            <person name="Barber J."/>
        </authorList>
    </citation>
    <scope>NUCLEOTIDE SEQUENCE [GENOMIC DNA]</scope>
</reference>
<reference key="2">
    <citation type="journal article" date="2000" name="Plant Mol. Biol. Rep.">
        <title>Chinese spring wheat (Triticum aestivum L.) chloroplast genome: complete sequence and contig clones.</title>
        <authorList>
            <person name="Ogihara Y."/>
            <person name="Isono K."/>
            <person name="Kojima T."/>
            <person name="Endo A."/>
            <person name="Hanaoka M."/>
            <person name="Shiina T."/>
            <person name="Terachi T."/>
            <person name="Utsugi S."/>
            <person name="Murata M."/>
            <person name="Mori N."/>
            <person name="Takumi S."/>
            <person name="Ikeo K."/>
            <person name="Gojobori T."/>
            <person name="Murai R."/>
            <person name="Murai K."/>
            <person name="Matsuoka Y."/>
            <person name="Ohnishi Y."/>
            <person name="Tajiri H."/>
            <person name="Tsunewaki K."/>
        </authorList>
    </citation>
    <scope>NUCLEOTIDE SEQUENCE [LARGE SCALE GENOMIC DNA]</scope>
    <source>
        <strain>cv. Chinese Spring</strain>
    </source>
</reference>
<gene>
    <name evidence="1" type="primary">ndhK</name>
    <name type="synonym">psbG</name>
</gene>
<name>NDHK_WHEAT</name>
<accession>P26304</accession>
<protein>
    <recommendedName>
        <fullName evidence="1">NAD(P)H-quinone oxidoreductase subunit K, chloroplastic</fullName>
        <ecNumber evidence="1">7.1.1.-</ecNumber>
    </recommendedName>
    <alternativeName>
        <fullName evidence="1">NAD(P)H dehydrogenase subunit K</fullName>
    </alternativeName>
    <alternativeName>
        <fullName evidence="1">NADH-plastoquinone oxidoreductase subunit K</fullName>
    </alternativeName>
</protein>
<sequence>MNLIEFPLLDQTSSNSVISTTPNDLSNWSRLSSLWPLLYGTSCCFIEFASLIGSRFDFDRYGLVPRSSPRQADLILTAGTVTMKMAPSLVRLYEQMPEPKYVIAMGACTITGGMFSTDSYSTVRGVDKLIPVDVYLPGCPPKPEAVIDALTKLRKKISREIVEDRTLSQNKNRCFTTSHKLYVRRSTHTGTYEQELLYQSPSTLDISSETFFKSKSSVPSYKLVN</sequence>
<feature type="chain" id="PRO_0000118757" description="NAD(P)H-quinone oxidoreductase subunit K, chloroplastic">
    <location>
        <begin position="1"/>
        <end position="225"/>
    </location>
</feature>
<feature type="binding site" evidence="1">
    <location>
        <position position="43"/>
    </location>
    <ligand>
        <name>[4Fe-4S] cluster</name>
        <dbReference type="ChEBI" id="CHEBI:49883"/>
    </ligand>
</feature>
<feature type="binding site" evidence="1">
    <location>
        <position position="44"/>
    </location>
    <ligand>
        <name>[4Fe-4S] cluster</name>
        <dbReference type="ChEBI" id="CHEBI:49883"/>
    </ligand>
</feature>
<feature type="binding site" evidence="1">
    <location>
        <position position="108"/>
    </location>
    <ligand>
        <name>[4Fe-4S] cluster</name>
        <dbReference type="ChEBI" id="CHEBI:49883"/>
    </ligand>
</feature>
<feature type="binding site" evidence="1">
    <location>
        <position position="139"/>
    </location>
    <ligand>
        <name>[4Fe-4S] cluster</name>
        <dbReference type="ChEBI" id="CHEBI:49883"/>
    </ligand>
</feature>
<evidence type="ECO:0000255" key="1">
    <source>
        <dbReference type="HAMAP-Rule" id="MF_01356"/>
    </source>
</evidence>
<evidence type="ECO:0000305" key="2"/>
<comment type="function">
    <text evidence="1">NDH shuttles electrons from NAD(P)H:plastoquinone, via FMN and iron-sulfur (Fe-S) centers, to quinones in the photosynthetic chain and possibly in a chloroplast respiratory chain. The immediate electron acceptor for the enzyme in this species is believed to be plastoquinone. Couples the redox reaction to proton translocation, and thus conserves the redox energy in a proton gradient.</text>
</comment>
<comment type="catalytic activity">
    <reaction evidence="1">
        <text>a plastoquinone + NADH + (n+1) H(+)(in) = a plastoquinol + NAD(+) + n H(+)(out)</text>
        <dbReference type="Rhea" id="RHEA:42608"/>
        <dbReference type="Rhea" id="RHEA-COMP:9561"/>
        <dbReference type="Rhea" id="RHEA-COMP:9562"/>
        <dbReference type="ChEBI" id="CHEBI:15378"/>
        <dbReference type="ChEBI" id="CHEBI:17757"/>
        <dbReference type="ChEBI" id="CHEBI:57540"/>
        <dbReference type="ChEBI" id="CHEBI:57945"/>
        <dbReference type="ChEBI" id="CHEBI:62192"/>
    </reaction>
</comment>
<comment type="catalytic activity">
    <reaction evidence="1">
        <text>a plastoquinone + NADPH + (n+1) H(+)(in) = a plastoquinol + NADP(+) + n H(+)(out)</text>
        <dbReference type="Rhea" id="RHEA:42612"/>
        <dbReference type="Rhea" id="RHEA-COMP:9561"/>
        <dbReference type="Rhea" id="RHEA-COMP:9562"/>
        <dbReference type="ChEBI" id="CHEBI:15378"/>
        <dbReference type="ChEBI" id="CHEBI:17757"/>
        <dbReference type="ChEBI" id="CHEBI:57783"/>
        <dbReference type="ChEBI" id="CHEBI:58349"/>
        <dbReference type="ChEBI" id="CHEBI:62192"/>
    </reaction>
</comment>
<comment type="cofactor">
    <cofactor evidence="1">
        <name>[4Fe-4S] cluster</name>
        <dbReference type="ChEBI" id="CHEBI:49883"/>
    </cofactor>
    <text evidence="1">Binds 1 [4Fe-4S] cluster.</text>
</comment>
<comment type="subunit">
    <text evidence="1">NDH is composed of at least 16 different subunits, 5 of which are encoded in the nucleus.</text>
</comment>
<comment type="subcellular location">
    <subcellularLocation>
        <location evidence="1">Plastid</location>
        <location evidence="1">Chloroplast thylakoid membrane</location>
        <topology evidence="1">Peripheral membrane protein</topology>
        <orientation evidence="1">Stromal side</orientation>
    </subcellularLocation>
</comment>
<comment type="similarity">
    <text evidence="1">Belongs to the complex I 20 kDa subunit family.</text>
</comment>
<comment type="sequence caution" evidence="2">
    <conflict type="erroneous initiation">
        <sequence resource="EMBL-CDS" id="AAA84731"/>
    </conflict>
</comment>
<comment type="sequence caution" evidence="2">
    <conflict type="erroneous initiation">
        <sequence resource="EMBL-CDS" id="BAB47038"/>
    </conflict>
</comment>
<geneLocation type="chloroplast"/>
<proteinExistence type="inferred from homology"/>